<protein>
    <recommendedName>
        <fullName>Oxygen-evolving enhancer protein 2</fullName>
        <shortName>OEE2</shortName>
    </recommendedName>
    <alternativeName>
        <fullName>20 kDa subunit of oxygen evolving system of photosystem II</fullName>
    </alternativeName>
</protein>
<accession>P80660</accession>
<name>PSBP1_PHYPA</name>
<dbReference type="InParanoid" id="P80660"/>
<dbReference type="Proteomes" id="UP000006727">
    <property type="component" value="Unplaced"/>
</dbReference>
<dbReference type="GO" id="GO:0009535">
    <property type="term" value="C:chloroplast thylakoid membrane"/>
    <property type="evidence" value="ECO:0007669"/>
    <property type="project" value="UniProtKB-SubCell"/>
</dbReference>
<dbReference type="GO" id="GO:0009523">
    <property type="term" value="C:photosystem II"/>
    <property type="evidence" value="ECO:0007669"/>
    <property type="project" value="UniProtKB-KW"/>
</dbReference>
<dbReference type="GO" id="GO:0015979">
    <property type="term" value="P:photosynthesis"/>
    <property type="evidence" value="ECO:0007669"/>
    <property type="project" value="UniProtKB-KW"/>
</dbReference>
<reference key="1">
    <citation type="journal article" date="1997" name="Planta">
        <title>Cytokinin affects nuclear- and plastome-encoded energy-converting plastid enzymes.</title>
        <authorList>
            <person name="Kasten B."/>
            <person name="Buck F."/>
            <person name="Nuske J."/>
            <person name="Reski R."/>
        </authorList>
    </citation>
    <scope>PROTEIN SEQUENCE</scope>
    <source>
        <tissue>Protonema</tissue>
    </source>
</reference>
<organism>
    <name type="scientific">Physcomitrium patens</name>
    <name type="common">Spreading-leaved earth moss</name>
    <name type="synonym">Physcomitrella patens</name>
    <dbReference type="NCBI Taxonomy" id="3218"/>
    <lineage>
        <taxon>Eukaryota</taxon>
        <taxon>Viridiplantae</taxon>
        <taxon>Streptophyta</taxon>
        <taxon>Embryophyta</taxon>
        <taxon>Bryophyta</taxon>
        <taxon>Bryophytina</taxon>
        <taxon>Bryopsida</taxon>
        <taxon>Funariidae</taxon>
        <taxon>Funariales</taxon>
        <taxon>Funariaceae</taxon>
        <taxon>Physcomitrium</taxon>
    </lineage>
</organism>
<evidence type="ECO:0000305" key="1"/>
<proteinExistence type="evidence at protein level"/>
<comment type="function">
    <text>May be involved in the regulation of photosystem II.</text>
</comment>
<comment type="subcellular location">
    <subcellularLocation>
        <location>Plastid</location>
        <location>Chloroplast thylakoid membrane</location>
    </subcellularLocation>
    <text>Associated with the photosystem II complex.</text>
</comment>
<comment type="induction">
    <text>By light.</text>
</comment>
<comment type="similarity">
    <text evidence="1">Belongs to the PsbP family.</text>
</comment>
<keyword id="KW-0150">Chloroplast</keyword>
<keyword id="KW-0903">Direct protein sequencing</keyword>
<keyword id="KW-0472">Membrane</keyword>
<keyword id="KW-0602">Photosynthesis</keyword>
<keyword id="KW-0604">Photosystem II</keyword>
<keyword id="KW-0934">Plastid</keyword>
<keyword id="KW-1185">Reference proteome</keyword>
<keyword id="KW-0793">Thylakoid</keyword>
<sequence>KKQTGFTPFIGNGFSLDVPXSITEYGPXEKXEDNFDATNNLFV</sequence>
<feature type="chain" id="PRO_0000220269" description="Oxygen-evolving enhancer protein 2">
    <location>
        <begin position="1"/>
        <end position="43" status="greater than"/>
    </location>
</feature>
<feature type="non-consecutive residues" evidence="1">
    <location>
        <begin position="19"/>
        <end position="20"/>
    </location>
</feature>
<feature type="non-consecutive residues" evidence="1">
    <location>
        <begin position="30"/>
        <end position="31"/>
    </location>
</feature>
<feature type="non-terminal residue">
    <location>
        <position position="43"/>
    </location>
</feature>